<keyword id="KW-0325">Glycoprotein</keyword>
<keyword id="KW-0635">Pregnancy</keyword>
<keyword id="KW-0646">Protease inhibitor</keyword>
<keyword id="KW-1185">Reference proteome</keyword>
<keyword id="KW-0722">Serine protease inhibitor</keyword>
<keyword id="KW-0732">Signal</keyword>
<sequence>MSHGRMNLALSLVFILCGLFNSIFCEKQQHSQKHMNLVLLKKISALSQKMEAHPKDFAQELFKALIIEDPRKNIIFSPMAMTTTLATLSLGIKSTMRTHHPEDLKLEPKLLDVHKYLQPLVHVGRELVKQKVLKHQHILFINRKMMVNQMLLQQISKLQGMDIQMIDFTDIEKAKKTISHHVAEKTHTKITNLITDLNPETILCLVNHIFFKGILKRAFQPKLTQKEVFFVNDQTKVQVDMMRKTERMLYSRSEELHATMVKMPCKGNVSLTLMLPDAGQFDTDLKKMTAKRAKLQKISDFRLVRLILPKLKISFKINFKHLLPKIDPKHILTATAISQAITSKAPLPNLEALHQAEIELSEHALTVDTAIHTDNLLKVPVKAKEVPAVVKVPMKAKEVPAVVKVPMNTKEVPVVVKVPMNTKEVPVVVKVNRPFLLFVEDEKTQRDLFVGKVLNPQVE</sequence>
<name>UTMP_BOVIN</name>
<feature type="signal peptide" evidence="2">
    <location>
        <begin position="1"/>
        <end position="25"/>
    </location>
</feature>
<feature type="chain" id="PRO_0000032531" description="Uterine milk protein">
    <location>
        <begin position="26"/>
        <end position="459"/>
    </location>
</feature>
<feature type="site" description="Reactive bond" evidence="1">
    <location>
        <begin position="420"/>
        <end position="421"/>
    </location>
</feature>
<feature type="glycosylation site" description="N-linked (GlcNAc...) asparagine" evidence="2">
    <location>
        <position position="268"/>
    </location>
</feature>
<evidence type="ECO:0000250" key="1"/>
<evidence type="ECO:0000255" key="2"/>
<evidence type="ECO:0000305" key="3"/>
<protein>
    <recommendedName>
        <fullName>Uterine milk protein</fullName>
        <shortName>UTMP</shortName>
    </recommendedName>
</protein>
<reference key="1">
    <citation type="journal article" date="1996" name="Proc. Natl. Acad. Sci. U.S.A.">
        <title>Pepsin-inhibitory activity of the uterine serpins.</title>
        <authorList>
            <person name="Mathialagan N."/>
            <person name="Hansen T.R."/>
        </authorList>
    </citation>
    <scope>NUCLEOTIDE SEQUENCE [MRNA]</scope>
    <source>
        <tissue>Endometrium</tissue>
    </source>
</reference>
<dbReference type="EMBL" id="L22095">
    <property type="protein sequence ID" value="AAB61677.1"/>
    <property type="molecule type" value="mRNA"/>
</dbReference>
<dbReference type="RefSeq" id="NP_777222.1">
    <property type="nucleotide sequence ID" value="NM_174797.3"/>
</dbReference>
<dbReference type="SMR" id="P46201"/>
<dbReference type="FunCoup" id="P46201">
    <property type="interactions" value="1"/>
</dbReference>
<dbReference type="STRING" id="9913.ENSBTAP00000009718"/>
<dbReference type="MEROPS" id="I04.981"/>
<dbReference type="GlyGen" id="P46201">
    <property type="glycosylation" value="1 site"/>
</dbReference>
<dbReference type="PaxDb" id="9913-ENSBTAP00000009718"/>
<dbReference type="GeneID" id="286871"/>
<dbReference type="KEGG" id="bta:286871"/>
<dbReference type="CTD" id="612383"/>
<dbReference type="eggNOG" id="KOG2392">
    <property type="taxonomic scope" value="Eukaryota"/>
</dbReference>
<dbReference type="HOGENOM" id="CLU_023330_2_1_1"/>
<dbReference type="InParanoid" id="P46201"/>
<dbReference type="OrthoDB" id="671595at2759"/>
<dbReference type="Proteomes" id="UP000009136">
    <property type="component" value="Unplaced"/>
</dbReference>
<dbReference type="GO" id="GO:0005615">
    <property type="term" value="C:extracellular space"/>
    <property type="evidence" value="ECO:0000318"/>
    <property type="project" value="GO_Central"/>
</dbReference>
<dbReference type="GO" id="GO:0004867">
    <property type="term" value="F:serine-type endopeptidase inhibitor activity"/>
    <property type="evidence" value="ECO:0000318"/>
    <property type="project" value="GO_Central"/>
</dbReference>
<dbReference type="GO" id="GO:0007565">
    <property type="term" value="P:female pregnancy"/>
    <property type="evidence" value="ECO:0007669"/>
    <property type="project" value="UniProtKB-KW"/>
</dbReference>
<dbReference type="CDD" id="cd19559">
    <property type="entry name" value="serpinA14_UTMP_UABP-2"/>
    <property type="match status" value="1"/>
</dbReference>
<dbReference type="Gene3D" id="2.30.39.10">
    <property type="entry name" value="Alpha-1-antitrypsin, domain 1"/>
    <property type="match status" value="1"/>
</dbReference>
<dbReference type="Gene3D" id="3.30.497.10">
    <property type="entry name" value="Antithrombin, subunit I, domain 2"/>
    <property type="match status" value="1"/>
</dbReference>
<dbReference type="Gene3D" id="2.10.310.10">
    <property type="entry name" value="Serpins superfamily"/>
    <property type="match status" value="1"/>
</dbReference>
<dbReference type="InterPro" id="IPR023795">
    <property type="entry name" value="Serpin_CS"/>
</dbReference>
<dbReference type="InterPro" id="IPR023796">
    <property type="entry name" value="Serpin_dom"/>
</dbReference>
<dbReference type="InterPro" id="IPR000215">
    <property type="entry name" value="Serpin_fam"/>
</dbReference>
<dbReference type="InterPro" id="IPR036186">
    <property type="entry name" value="Serpin_sf"/>
</dbReference>
<dbReference type="InterPro" id="IPR042178">
    <property type="entry name" value="Serpin_sf_1"/>
</dbReference>
<dbReference type="InterPro" id="IPR042185">
    <property type="entry name" value="Serpin_sf_2"/>
</dbReference>
<dbReference type="PANTHER" id="PTHR11461">
    <property type="entry name" value="SERINE PROTEASE INHIBITOR, SERPIN"/>
    <property type="match status" value="1"/>
</dbReference>
<dbReference type="PANTHER" id="PTHR11461:SF164">
    <property type="entry name" value="UTEROFERRIN-ASSOCIATED PROTEIN"/>
    <property type="match status" value="1"/>
</dbReference>
<dbReference type="Pfam" id="PF00079">
    <property type="entry name" value="Serpin"/>
    <property type="match status" value="1"/>
</dbReference>
<dbReference type="SMART" id="SM00093">
    <property type="entry name" value="SERPIN"/>
    <property type="match status" value="1"/>
</dbReference>
<dbReference type="SUPFAM" id="SSF56574">
    <property type="entry name" value="Serpins"/>
    <property type="match status" value="1"/>
</dbReference>
<dbReference type="PROSITE" id="PS00284">
    <property type="entry name" value="SERPIN"/>
    <property type="match status" value="1"/>
</dbReference>
<proteinExistence type="evidence at transcript level"/>
<organism>
    <name type="scientific">Bos taurus</name>
    <name type="common">Bovine</name>
    <dbReference type="NCBI Taxonomy" id="9913"/>
    <lineage>
        <taxon>Eukaryota</taxon>
        <taxon>Metazoa</taxon>
        <taxon>Chordata</taxon>
        <taxon>Craniata</taxon>
        <taxon>Vertebrata</taxon>
        <taxon>Euteleostomi</taxon>
        <taxon>Mammalia</taxon>
        <taxon>Eutheria</taxon>
        <taxon>Laurasiatheria</taxon>
        <taxon>Artiodactyla</taxon>
        <taxon>Ruminantia</taxon>
        <taxon>Pecora</taxon>
        <taxon>Bovidae</taxon>
        <taxon>Bovinae</taxon>
        <taxon>Bos</taxon>
    </lineage>
</organism>
<comment type="similarity">
    <text evidence="3">Belongs to the serpin family. UTMP subfamily.</text>
</comment>
<accession>P46201</accession>